<dbReference type="EC" id="1.1.1.-" evidence="3"/>
<dbReference type="EMBL" id="JF910157">
    <property type="protein sequence ID" value="AEI16475.1"/>
    <property type="molecule type" value="mRNA"/>
</dbReference>
<dbReference type="EMBL" id="PKPP01000550">
    <property type="protein sequence ID" value="PWA91359.1"/>
    <property type="molecule type" value="Genomic_DNA"/>
</dbReference>
<dbReference type="PDB" id="6LJH">
    <property type="method" value="X-ray"/>
    <property type="resolution" value="1.80 A"/>
    <property type="chains" value="A=1-378"/>
</dbReference>
<dbReference type="PDB" id="7CYI">
    <property type="method" value="X-ray"/>
    <property type="resolution" value="2.95 A"/>
    <property type="chains" value="A/B/C/D=1-378"/>
</dbReference>
<dbReference type="PDBsum" id="6LJH"/>
<dbReference type="PDBsum" id="7CYI"/>
<dbReference type="SMR" id="A0A2U1Q018"/>
<dbReference type="STRING" id="35608.A0A2U1Q018"/>
<dbReference type="OrthoDB" id="417550at2759"/>
<dbReference type="Proteomes" id="UP000245207">
    <property type="component" value="Unassembled WGS sequence"/>
</dbReference>
<dbReference type="GO" id="GO:0005829">
    <property type="term" value="C:cytosol"/>
    <property type="evidence" value="ECO:0007669"/>
    <property type="project" value="UniProtKB-SubCell"/>
</dbReference>
<dbReference type="GO" id="GO:0005634">
    <property type="term" value="C:nucleus"/>
    <property type="evidence" value="ECO:0007669"/>
    <property type="project" value="UniProtKB-SubCell"/>
</dbReference>
<dbReference type="GO" id="GO:0051903">
    <property type="term" value="F:S-(hydroxymethyl)glutathione dehydrogenase [NAD(P)+] activity"/>
    <property type="evidence" value="ECO:0007669"/>
    <property type="project" value="TreeGrafter"/>
</dbReference>
<dbReference type="GO" id="GO:0008270">
    <property type="term" value="F:zinc ion binding"/>
    <property type="evidence" value="ECO:0007669"/>
    <property type="project" value="InterPro"/>
</dbReference>
<dbReference type="GO" id="GO:0046294">
    <property type="term" value="P:formaldehyde catabolic process"/>
    <property type="evidence" value="ECO:0007669"/>
    <property type="project" value="TreeGrafter"/>
</dbReference>
<dbReference type="CDD" id="cd08277">
    <property type="entry name" value="liver_alcohol_DH_like"/>
    <property type="match status" value="1"/>
</dbReference>
<dbReference type="FunFam" id="3.90.180.10:FF:000067">
    <property type="entry name" value="alcohol dehydrogenase 1-like isoform X1"/>
    <property type="match status" value="1"/>
</dbReference>
<dbReference type="FunFam" id="3.40.50.720:FF:000003">
    <property type="entry name" value="S-(hydroxymethyl)glutathione dehydrogenase"/>
    <property type="match status" value="1"/>
</dbReference>
<dbReference type="Gene3D" id="3.90.180.10">
    <property type="entry name" value="Medium-chain alcohol dehydrogenases, catalytic domain"/>
    <property type="match status" value="1"/>
</dbReference>
<dbReference type="Gene3D" id="3.40.50.720">
    <property type="entry name" value="NAD(P)-binding Rossmann-like Domain"/>
    <property type="match status" value="1"/>
</dbReference>
<dbReference type="InterPro" id="IPR013149">
    <property type="entry name" value="ADH-like_C"/>
</dbReference>
<dbReference type="InterPro" id="IPR013154">
    <property type="entry name" value="ADH-like_N"/>
</dbReference>
<dbReference type="InterPro" id="IPR002328">
    <property type="entry name" value="ADH_Zn_CS"/>
</dbReference>
<dbReference type="InterPro" id="IPR011032">
    <property type="entry name" value="GroES-like_sf"/>
</dbReference>
<dbReference type="InterPro" id="IPR036291">
    <property type="entry name" value="NAD(P)-bd_dom_sf"/>
</dbReference>
<dbReference type="InterPro" id="IPR020843">
    <property type="entry name" value="PKS_ER"/>
</dbReference>
<dbReference type="PANTHER" id="PTHR43880">
    <property type="entry name" value="ALCOHOL DEHYDROGENASE"/>
    <property type="match status" value="1"/>
</dbReference>
<dbReference type="PANTHER" id="PTHR43880:SF38">
    <property type="entry name" value="ALCOHOL DEHYDROGENASE-RELATED"/>
    <property type="match status" value="1"/>
</dbReference>
<dbReference type="Pfam" id="PF08240">
    <property type="entry name" value="ADH_N"/>
    <property type="match status" value="1"/>
</dbReference>
<dbReference type="Pfam" id="PF00107">
    <property type="entry name" value="ADH_zinc_N"/>
    <property type="match status" value="1"/>
</dbReference>
<dbReference type="SMART" id="SM00829">
    <property type="entry name" value="PKS_ER"/>
    <property type="match status" value="1"/>
</dbReference>
<dbReference type="SUPFAM" id="SSF50129">
    <property type="entry name" value="GroES-like"/>
    <property type="match status" value="2"/>
</dbReference>
<dbReference type="SUPFAM" id="SSF51735">
    <property type="entry name" value="NAD(P)-binding Rossmann-fold domains"/>
    <property type="match status" value="1"/>
</dbReference>
<dbReference type="PROSITE" id="PS00059">
    <property type="entry name" value="ADH_ZINC"/>
    <property type="match status" value="1"/>
</dbReference>
<protein>
    <recommendedName>
        <fullName evidence="5">Alcohol dehydrogenase 1</fullName>
        <ecNumber evidence="3">1.1.1.-</ecNumber>
    </recommendedName>
    <alternativeName>
        <fullName evidence="11">Artemisinic aldehyde synthase</fullName>
    </alternativeName>
</protein>
<keyword id="KW-0002">3D-structure</keyword>
<keyword id="KW-0963">Cytoplasm</keyword>
<keyword id="KW-0479">Metal-binding</keyword>
<keyword id="KW-0520">NAD</keyword>
<keyword id="KW-0539">Nucleus</keyword>
<keyword id="KW-0560">Oxidoreductase</keyword>
<keyword id="KW-1185">Reference proteome</keyword>
<keyword id="KW-0862">Zinc</keyword>
<accession>A0A2U1Q018</accession>
<accession>G8EHE1</accession>
<comment type="function">
    <text evidence="3 6">Involved in the biosynthesis of the antimalarial endoperoxide artemisinin (PubMed:23575629, PubMed:27488942). Catalyzes the conversion of artemisinic alcohol into artemisinic aldehyde (PubMed:23575629).</text>
</comment>
<comment type="catalytic activity">
    <reaction evidence="3">
        <text>(+)-artemisinic alcohol + NAD(+) = (+)-artemisinic aldehyde + NADH + H(+)</text>
        <dbReference type="Rhea" id="RHEA:60712"/>
        <dbReference type="ChEBI" id="CHEBI:15378"/>
        <dbReference type="ChEBI" id="CHEBI:57540"/>
        <dbReference type="ChEBI" id="CHEBI:57945"/>
        <dbReference type="ChEBI" id="CHEBI:64688"/>
        <dbReference type="ChEBI" id="CHEBI:64783"/>
    </reaction>
    <physiologicalReaction direction="left-to-right" evidence="3">
        <dbReference type="Rhea" id="RHEA:60713"/>
    </physiologicalReaction>
</comment>
<comment type="cofactor">
    <cofactor evidence="1">
        <name>Zn(2+)</name>
        <dbReference type="ChEBI" id="CHEBI:29105"/>
    </cofactor>
    <text evidence="1">Binds 2 Zn(2+) ions per subunit.</text>
</comment>
<comment type="biophysicochemical properties">
    <kinetics>
        <KM evidence="3">11 uM for artemisinic alcohol</KM>
        <text evidence="3">kcat is 41 sec(-1) with artemisinic alcohol as substrate.</text>
    </kinetics>
</comment>
<comment type="pathway">
    <text evidence="7">Sesquiterpene biosynthesis.</text>
</comment>
<comment type="subunit">
    <text evidence="1">Homodimer.</text>
</comment>
<comment type="subcellular location">
    <subcellularLocation>
        <location evidence="2">Nucleus</location>
    </subcellularLocation>
    <subcellularLocation>
        <location evidence="2">Cytoplasm</location>
        <location evidence="2">Cytosol</location>
    </subcellularLocation>
</comment>
<comment type="tissue specificity">
    <text evidence="4">Present in non-glandular trichome cells.</text>
</comment>
<comment type="biotechnology">
    <text evidence="8 9">Artemisinin and derivatives (e.g. artesunate), are antimalarial drugs due to their endoperoxidase properties; they also display multiple pharmacological actions against inflammation,viral infections, and cell and tumor proliferation (PubMed:32405226, PubMed:32514287). Artesunate may be a promising treatment for COVID-19 mediated by the severe acute respiratory syndrome coronavirus 2 (2019-nCoV) (SARS-CoV-2) because of its anti-inflammatory activity, NF-kappaB (nuclear factor kappa B)-coronavirus effect and chloroquine-like endocytosis inhibition mechanism (PubMed:32405226, PubMed:32514287).</text>
</comment>
<comment type="biotechnology">
    <text evidence="3">Yeast (S.cerevisiae) has been engineered to produce artemisinic-acid, a precursor of the antimalarial artemisinin compound, by expressing AMS1/ADS, CYP71AV1, ADH1 and ALDH1 in conjunction with CYB5 and CPR1.</text>
</comment>
<comment type="similarity">
    <text evidence="10">Belongs to the zinc-containing alcohol dehydrogenase family. Class-IV subfamily.</text>
</comment>
<evidence type="ECO:0000250" key="1">
    <source>
        <dbReference type="UniProtKB" id="P40394"/>
    </source>
</evidence>
<evidence type="ECO:0000250" key="2">
    <source>
        <dbReference type="UniProtKB" id="W8JWV8"/>
    </source>
</evidence>
<evidence type="ECO:0000269" key="3">
    <source>
    </source>
</evidence>
<evidence type="ECO:0000269" key="4">
    <source>
    </source>
</evidence>
<evidence type="ECO:0000303" key="5">
    <source>
    </source>
</evidence>
<evidence type="ECO:0000303" key="6">
    <source>
    </source>
</evidence>
<evidence type="ECO:0000303" key="7">
    <source>
    </source>
</evidence>
<evidence type="ECO:0000303" key="8">
    <source>
    </source>
</evidence>
<evidence type="ECO:0000303" key="9">
    <source>
    </source>
</evidence>
<evidence type="ECO:0000305" key="10"/>
<evidence type="ECO:0000305" key="11">
    <source>
    </source>
</evidence>
<evidence type="ECO:0000312" key="12">
    <source>
        <dbReference type="EMBL" id="PWA91359.1"/>
    </source>
</evidence>
<evidence type="ECO:0007829" key="13">
    <source>
        <dbReference type="PDB" id="6LJH"/>
    </source>
</evidence>
<evidence type="ECO:0007829" key="14">
    <source>
        <dbReference type="PDB" id="7CYI"/>
    </source>
</evidence>
<organism>
    <name type="scientific">Artemisia annua</name>
    <name type="common">Sweet wormwood</name>
    <dbReference type="NCBI Taxonomy" id="35608"/>
    <lineage>
        <taxon>Eukaryota</taxon>
        <taxon>Viridiplantae</taxon>
        <taxon>Streptophyta</taxon>
        <taxon>Embryophyta</taxon>
        <taxon>Tracheophyta</taxon>
        <taxon>Spermatophyta</taxon>
        <taxon>Magnoliopsida</taxon>
        <taxon>eudicotyledons</taxon>
        <taxon>Gunneridae</taxon>
        <taxon>Pentapetalae</taxon>
        <taxon>asterids</taxon>
        <taxon>campanulids</taxon>
        <taxon>Asterales</taxon>
        <taxon>Asteraceae</taxon>
        <taxon>Asteroideae</taxon>
        <taxon>Anthemideae</taxon>
        <taxon>Artemisiinae</taxon>
        <taxon>Artemisia</taxon>
    </lineage>
</organism>
<proteinExistence type="evidence at protein level"/>
<feature type="chain" id="PRO_0000447845" description="Alcohol dehydrogenase 1">
    <location>
        <begin position="1"/>
        <end position="378"/>
    </location>
</feature>
<feature type="binding site" evidence="1">
    <location>
        <position position="48"/>
    </location>
    <ligand>
        <name>Zn(2+)</name>
        <dbReference type="ChEBI" id="CHEBI:29105"/>
        <label>1</label>
        <note>catalytic</note>
    </ligand>
</feature>
<feature type="binding site" evidence="1">
    <location>
        <begin position="49"/>
        <end position="53"/>
    </location>
    <ligand>
        <name>NAD(+)</name>
        <dbReference type="ChEBI" id="CHEBI:57540"/>
    </ligand>
</feature>
<feature type="binding site" evidence="1">
    <location>
        <position position="69"/>
    </location>
    <ligand>
        <name>Zn(2+)</name>
        <dbReference type="ChEBI" id="CHEBI:29105"/>
        <label>1</label>
        <note>catalytic</note>
    </ligand>
</feature>
<feature type="binding site" evidence="1">
    <location>
        <position position="99"/>
    </location>
    <ligand>
        <name>Zn(2+)</name>
        <dbReference type="ChEBI" id="CHEBI:29105"/>
        <label>2</label>
    </ligand>
</feature>
<feature type="binding site" evidence="1">
    <location>
        <position position="102"/>
    </location>
    <ligand>
        <name>Zn(2+)</name>
        <dbReference type="ChEBI" id="CHEBI:29105"/>
        <label>2</label>
    </ligand>
</feature>
<feature type="binding site" evidence="1">
    <location>
        <position position="105"/>
    </location>
    <ligand>
        <name>Zn(2+)</name>
        <dbReference type="ChEBI" id="CHEBI:29105"/>
        <label>2</label>
    </ligand>
</feature>
<feature type="binding site" evidence="1">
    <location>
        <position position="113"/>
    </location>
    <ligand>
        <name>Zn(2+)</name>
        <dbReference type="ChEBI" id="CHEBI:29105"/>
        <label>2</label>
    </ligand>
</feature>
<feature type="binding site" evidence="1">
    <location>
        <position position="177"/>
    </location>
    <ligand>
        <name>Zn(2+)</name>
        <dbReference type="ChEBI" id="CHEBI:29105"/>
        <label>1</label>
        <note>catalytic</note>
    </ligand>
</feature>
<feature type="binding site" evidence="1">
    <location>
        <begin position="202"/>
        <end position="207"/>
    </location>
    <ligand>
        <name>NAD(+)</name>
        <dbReference type="ChEBI" id="CHEBI:57540"/>
    </ligand>
</feature>
<feature type="binding site" evidence="1">
    <location>
        <position position="226"/>
    </location>
    <ligand>
        <name>NAD(+)</name>
        <dbReference type="ChEBI" id="CHEBI:57540"/>
    </ligand>
</feature>
<feature type="binding site" evidence="1">
    <location>
        <position position="231"/>
    </location>
    <ligand>
        <name>NAD(+)</name>
        <dbReference type="ChEBI" id="CHEBI:57540"/>
    </ligand>
</feature>
<feature type="binding site" evidence="1">
    <location>
        <begin position="274"/>
        <end position="276"/>
    </location>
    <ligand>
        <name>NAD(+)</name>
        <dbReference type="ChEBI" id="CHEBI:57540"/>
    </ligand>
</feature>
<feature type="binding site" evidence="1">
    <location>
        <begin position="297"/>
        <end position="299"/>
    </location>
    <ligand>
        <name>NAD(+)</name>
        <dbReference type="ChEBI" id="CHEBI:57540"/>
    </ligand>
</feature>
<feature type="binding site" evidence="1">
    <location>
        <begin position="321"/>
        <end position="323"/>
    </location>
    <ligand>
        <name>NAD(+)</name>
        <dbReference type="ChEBI" id="CHEBI:57540"/>
    </ligand>
</feature>
<feature type="sequence conflict" description="In Ref. 1; AEI16475." evidence="10" ref="1">
    <original>LG</original>
    <variation>SS</variation>
    <location>
        <begin position="19"/>
        <end position="20"/>
    </location>
</feature>
<feature type="sequence conflict" description="In Ref. 1; AEI16475." evidence="10" ref="1">
    <original>V</original>
    <variation>I</variation>
    <location>
        <position position="78"/>
    </location>
</feature>
<feature type="strand" evidence="13">
    <location>
        <begin position="9"/>
        <end position="16"/>
    </location>
</feature>
<feature type="strand" evidence="13">
    <location>
        <begin position="23"/>
        <end position="30"/>
    </location>
</feature>
<feature type="strand" evidence="13">
    <location>
        <begin position="37"/>
        <end position="45"/>
    </location>
</feature>
<feature type="helix" evidence="13">
    <location>
        <begin position="49"/>
        <end position="55"/>
    </location>
</feature>
<feature type="strand" evidence="13">
    <location>
        <begin position="63"/>
        <end position="65"/>
    </location>
</feature>
<feature type="strand" evidence="13">
    <location>
        <begin position="71"/>
        <end position="78"/>
    </location>
</feature>
<feature type="strand" evidence="13">
    <location>
        <begin position="90"/>
        <end position="93"/>
    </location>
</feature>
<feature type="strand" evidence="13">
    <location>
        <begin position="100"/>
        <end position="102"/>
    </location>
</feature>
<feature type="helix" evidence="13">
    <location>
        <begin position="103"/>
        <end position="107"/>
    </location>
</feature>
<feature type="strand" evidence="13">
    <location>
        <begin position="114"/>
        <end position="116"/>
    </location>
</feature>
<feature type="strand" evidence="13">
    <location>
        <begin position="121"/>
        <end position="123"/>
    </location>
</feature>
<feature type="strand" evidence="13">
    <location>
        <begin position="130"/>
        <end position="133"/>
    </location>
</feature>
<feature type="turn" evidence="13">
    <location>
        <begin position="134"/>
        <end position="136"/>
    </location>
</feature>
<feature type="strand" evidence="14">
    <location>
        <begin position="141"/>
        <end position="143"/>
    </location>
</feature>
<feature type="strand" evidence="13">
    <location>
        <begin position="149"/>
        <end position="156"/>
    </location>
</feature>
<feature type="helix" evidence="13">
    <location>
        <begin position="157"/>
        <end position="159"/>
    </location>
</feature>
<feature type="strand" evidence="13">
    <location>
        <begin position="160"/>
        <end position="162"/>
    </location>
</feature>
<feature type="helix" evidence="13">
    <location>
        <begin position="169"/>
        <end position="175"/>
    </location>
</feature>
<feature type="helix" evidence="13">
    <location>
        <begin position="178"/>
        <end position="188"/>
    </location>
</feature>
<feature type="strand" evidence="13">
    <location>
        <begin position="197"/>
        <end position="201"/>
    </location>
</feature>
<feature type="helix" evidence="13">
    <location>
        <begin position="205"/>
        <end position="216"/>
    </location>
</feature>
<feature type="strand" evidence="13">
    <location>
        <begin position="220"/>
        <end position="225"/>
    </location>
</feature>
<feature type="helix" evidence="13">
    <location>
        <begin position="231"/>
        <end position="238"/>
    </location>
</feature>
<feature type="strand" evidence="13">
    <location>
        <begin position="242"/>
        <end position="244"/>
    </location>
</feature>
<feature type="helix" evidence="13">
    <location>
        <begin position="246"/>
        <end position="248"/>
    </location>
</feature>
<feature type="helix" evidence="13">
    <location>
        <begin position="254"/>
        <end position="260"/>
    </location>
</feature>
<feature type="turn" evidence="13">
    <location>
        <begin position="261"/>
        <end position="264"/>
    </location>
</feature>
<feature type="strand" evidence="13">
    <location>
        <begin position="267"/>
        <end position="272"/>
    </location>
</feature>
<feature type="helix" evidence="13">
    <location>
        <begin position="277"/>
        <end position="286"/>
    </location>
</feature>
<feature type="turn" evidence="13">
    <location>
        <begin position="289"/>
        <end position="291"/>
    </location>
</feature>
<feature type="strand" evidence="13">
    <location>
        <begin position="293"/>
        <end position="296"/>
    </location>
</feature>
<feature type="strand" evidence="14">
    <location>
        <begin position="302"/>
        <end position="308"/>
    </location>
</feature>
<feature type="helix" evidence="13">
    <location>
        <begin position="309"/>
        <end position="313"/>
    </location>
</feature>
<feature type="strand" evidence="14">
    <location>
        <begin position="317"/>
        <end position="319"/>
    </location>
</feature>
<feature type="helix" evidence="13">
    <location>
        <begin position="323"/>
        <end position="325"/>
    </location>
</feature>
<feature type="turn" evidence="13">
    <location>
        <begin position="328"/>
        <end position="331"/>
    </location>
</feature>
<feature type="helix" evidence="13">
    <location>
        <begin position="332"/>
        <end position="340"/>
    </location>
</feature>
<feature type="helix" evidence="13">
    <location>
        <begin position="347"/>
        <end position="349"/>
    </location>
</feature>
<feature type="strand" evidence="13">
    <location>
        <begin position="350"/>
        <end position="355"/>
    </location>
</feature>
<feature type="helix" evidence="13">
    <location>
        <begin position="356"/>
        <end position="358"/>
    </location>
</feature>
<feature type="helix" evidence="13">
    <location>
        <begin position="359"/>
        <end position="365"/>
    </location>
</feature>
<feature type="strand" evidence="13">
    <location>
        <begin position="372"/>
        <end position="377"/>
    </location>
</feature>
<gene>
    <name evidence="5" type="primary">ADH1</name>
    <name evidence="12" type="ORF">CTI12_AA090660</name>
</gene>
<sequence>MAQKAPGVITCKAAVVWELGGPVVLEEIRVDPPKASEVRIKMLCASLCHTDVLCTKGFPIPLFPRIPGHEGVGVIESVGKDAKGLKPGDIVMPLYLGECGQCLNCKTGKTNLCHVYPPSFSGLMNDGTSRMSIARTGESIYHFASCSTWTEYAVADCNYVLKINPKISYPHASFLSCGFTTGFGATWRETQVSKGSSVAVFGIGTVGLGVIKGAQLQGASKIIGVDVNQYKAAKGKVFGMTDFINPKDHPDKSVSELVKELTHGLGVDHCFECTGVPSLLNEALEASKIGIGTVVPIGAGGEASVAINSLILFSGRTLKFTAFGGVRTQSDLPVIIDKCLNKEIQLDELLTHEIHLDNIQEAFEILKKPDCVKILIKF</sequence>
<reference key="1">
    <citation type="journal article" date="2013" name="Nature">
        <title>High-level semi-synthetic production of the potent antimalarial artemisinin.</title>
        <authorList>
            <person name="Paddon C.J."/>
            <person name="Westfall P.J."/>
            <person name="Pitera D.J."/>
            <person name="Benjamin K."/>
            <person name="Fisher K."/>
            <person name="McPhee D."/>
            <person name="Leavell M.D."/>
            <person name="Tai A."/>
            <person name="Main A."/>
            <person name="Eng D."/>
            <person name="Polichuk D.R."/>
            <person name="Teoh K.H."/>
            <person name="Reed D.W."/>
            <person name="Treynor T."/>
            <person name="Lenihan J."/>
            <person name="Fleck M."/>
            <person name="Bajad S."/>
            <person name="Dang G."/>
            <person name="Diola D."/>
            <person name="Dorin G."/>
            <person name="Ellens K.W."/>
            <person name="Fickes S."/>
            <person name="Galazzo J."/>
            <person name="Gaucher S.P."/>
            <person name="Geistlinger T."/>
            <person name="Henry R."/>
            <person name="Hepp M."/>
            <person name="Horning T."/>
            <person name="Iqbal T."/>
            <person name="Jiang H."/>
            <person name="Kizer L."/>
            <person name="Lieu B."/>
            <person name="Melis D."/>
            <person name="Moss N."/>
            <person name="Regentin R."/>
            <person name="Secrest S."/>
            <person name="Tsuruta H."/>
            <person name="Vazquez R."/>
            <person name="Westblade L.F."/>
            <person name="Xu L."/>
            <person name="Yu M."/>
            <person name="Zhang Y."/>
            <person name="Zhao L."/>
            <person name="Lievense J."/>
            <person name="Covello P.S."/>
            <person name="Keasling J.D."/>
            <person name="Reiling K.K."/>
            <person name="Renninger N.S."/>
            <person name="Newman J.D."/>
        </authorList>
    </citation>
    <scope>NUCLEOTIDE SEQUENCE [MRNA]</scope>
    <scope>FUNCTION</scope>
    <scope>CATALYTIC ACTIVITY</scope>
    <scope>BIOTECHNOLOGY</scope>
    <scope>BIOPHYSICOCHEMICAL PROPERTIES</scope>
    <source>
        <tissue>Trichome gland</tissue>
    </source>
</reference>
<reference key="2">
    <citation type="journal article" date="2018" name="Mol. Plant">
        <title>The genome of Artemisia annua provides insight into the evolution of Asteraceae family and artemisinin biosynthesis.</title>
        <authorList>
            <person name="Shen Q."/>
            <person name="Zhang L."/>
            <person name="Liao Z."/>
            <person name="Wang S."/>
            <person name="Yan T."/>
            <person name="Shi P."/>
            <person name="Liu M."/>
            <person name="Fu X."/>
            <person name="Pan Q."/>
            <person name="Wang Y."/>
            <person name="Lv Z."/>
            <person name="Lu X."/>
            <person name="Zhang F."/>
            <person name="Jiang W."/>
            <person name="Ma Y."/>
            <person name="Chen M."/>
            <person name="Hao X."/>
            <person name="Li L."/>
            <person name="Tang Y."/>
            <person name="Lv G."/>
            <person name="Zhou Y."/>
            <person name="Sun X."/>
            <person name="Brodelius P.E."/>
            <person name="Rose J.K.C."/>
            <person name="Tang K."/>
        </authorList>
    </citation>
    <scope>NUCLEOTIDE SEQUENCE [LARGE SCALE GENOMIC DNA]</scope>
    <source>
        <strain>cv. Huhao1</strain>
        <tissue>Leaf</tissue>
    </source>
</reference>
<reference key="3">
    <citation type="journal article" date="2016" name="Angew. Chem. Int. Ed.">
        <title>Artemisinin-A Gift from Traditional Chinese Medicine to the World (Nobel Lecture).</title>
        <authorList>
            <person name="Tu Y."/>
        </authorList>
    </citation>
    <scope>REVIEW ON ARTEMISININ ANTIMALARIAL PROPERTIES</scope>
</reference>
<reference key="4">
    <citation type="journal article" date="2019" name="Mol. Plant">
        <title>Artemisinin biosynthesis in non-glandular trichome cells of Artemisia annua.</title>
        <authorList>
            <person name="Judd R."/>
            <person name="Bagley M.C."/>
            <person name="Li M."/>
            <person name="Zhu Y."/>
            <person name="Lei C."/>
            <person name="Yuzuak S."/>
            <person name="Ekeloef M."/>
            <person name="Pu G."/>
            <person name="Zhao X."/>
            <person name="Muddiman D.C."/>
            <person name="Xie D.-Y."/>
        </authorList>
    </citation>
    <scope>TISSUE SPECIFICITY</scope>
</reference>
<reference key="5">
    <citation type="journal article" date="2019" name="Nat. Prod. Rep.">
        <title>Non-volatile natural products in plant glandular trichomes: chemistry, biological activities and biosynthesis.</title>
        <authorList>
            <person name="Liu Y."/>
            <person name="Jing S.-X."/>
            <person name="Luo S.-H."/>
            <person name="Li S.-H."/>
        </authorList>
    </citation>
    <scope>PATHWAY</scope>
    <scope>REVIEW</scope>
</reference>
<reference key="6">
    <citation type="journal article" date="2020" name="Chin. Med. J.">
        <title>Artesunate: could be an alternative drug to chloroquine in COVID-19 treatment?</title>
        <authorList>
            <person name="Uzun T."/>
            <person name="Toptas O."/>
        </authorList>
    </citation>
    <scope>BIOTECHNOLOGY</scope>
</reference>
<reference key="7">
    <citation type="journal article" date="2020" name="Pharmacol. Res.">
        <title>Anti-malarial drug, artemisinin and its derivatives for the treatment of respiratory diseases.</title>
        <authorList>
            <person name="Cheong D.H.J."/>
            <person name="Tan D.W.S."/>
            <person name="Wong F.W.S."/>
            <person name="Tran T."/>
        </authorList>
    </citation>
    <scope>BIOTECHNOLOGY</scope>
    <scope>REVIEW</scope>
</reference>
<name>ADH1_ARTAN</name>